<accession>Q6NU94</accession>
<feature type="chain" id="PRO_0000370559" description="tRNA (guanine-N(7)-)-methyltransferase">
    <location>
        <begin position="1"/>
        <end position="273"/>
    </location>
</feature>
<feature type="region of interest" description="AlphaC helix" evidence="2">
    <location>
        <begin position="166"/>
        <end position="174"/>
    </location>
</feature>
<feature type="region of interest" description="Alpha6 helix" evidence="2">
    <location>
        <begin position="240"/>
        <end position="248"/>
    </location>
</feature>
<feature type="active site" evidence="2">
    <location>
        <position position="165"/>
    </location>
</feature>
<feature type="binding site" evidence="2">
    <location>
        <position position="86"/>
    </location>
    <ligand>
        <name>S-adenosyl-L-methionine</name>
        <dbReference type="ChEBI" id="CHEBI:59789"/>
    </ligand>
</feature>
<feature type="binding site" evidence="2">
    <location>
        <position position="109"/>
    </location>
    <ligand>
        <name>S-adenosyl-L-methionine</name>
        <dbReference type="ChEBI" id="CHEBI:59789"/>
    </ligand>
</feature>
<feature type="binding site" evidence="2">
    <location>
        <position position="111"/>
    </location>
    <ligand>
        <name>S-adenosyl-L-methionine</name>
        <dbReference type="ChEBI" id="CHEBI:59789"/>
    </ligand>
</feature>
<feature type="binding site" evidence="2">
    <location>
        <position position="142"/>
    </location>
    <ligand>
        <name>S-adenosyl-L-methionine</name>
        <dbReference type="ChEBI" id="CHEBI:59789"/>
    </ligand>
</feature>
<feature type="binding site" evidence="2">
    <location>
        <position position="143"/>
    </location>
    <ligand>
        <name>S-adenosyl-L-methionine</name>
        <dbReference type="ChEBI" id="CHEBI:59789"/>
    </ligand>
</feature>
<feature type="binding site" evidence="2">
    <location>
        <position position="162"/>
    </location>
    <ligand>
        <name>S-adenosyl-L-methionine</name>
        <dbReference type="ChEBI" id="CHEBI:59789"/>
    </ligand>
</feature>
<feature type="binding site" evidence="2">
    <location>
        <position position="240"/>
    </location>
    <ligand>
        <name>S-adenosyl-L-methionine</name>
        <dbReference type="ChEBI" id="CHEBI:59789"/>
    </ligand>
</feature>
<feature type="binding site" evidence="2">
    <location>
        <position position="242"/>
    </location>
    <ligand>
        <name>S-adenosyl-L-methionine</name>
        <dbReference type="ChEBI" id="CHEBI:59789"/>
    </ligand>
</feature>
<keyword id="KW-0489">Methyltransferase</keyword>
<keyword id="KW-0539">Nucleus</keyword>
<keyword id="KW-1185">Reference proteome</keyword>
<keyword id="KW-0694">RNA-binding</keyword>
<keyword id="KW-0949">S-adenosyl-L-methionine</keyword>
<keyword id="KW-0808">Transferase</keyword>
<keyword id="KW-0819">tRNA processing</keyword>
<keyword id="KW-0820">tRNA-binding</keyword>
<comment type="function">
    <text evidence="1">Catalytic component of METTL1-WDR4 methyltransferase complex that mediates the formation of N(7)-methylguanine in a subset of RNA species, such as tRNAs, mRNAs and microRNAs (miRNAs). Catalyzes the formation of N(7)-methylguanine at position 46 (m7G46) in a large subset of tRNAs that contain the 5'-RAGGU-3' motif within the variable loop. M7G46 interacts with C13-G22 in the D-loop to stabilize tRNA tertiary structure and protect tRNAs from decay. Also acts as a methyltransferase for a subset of internal N(7)-methylguanine in mRNAs. Internal N(7)-methylguanine methylation of mRNAs in response to stress promotes their relocalization to stress granules, thereby suppressing their translation. Also methylates a specific subset of miRNAs.</text>
</comment>
<comment type="catalytic activity">
    <reaction evidence="2">
        <text>guanosine(46) in tRNA + S-adenosyl-L-methionine = N(7)-methylguanosine(46) in tRNA + S-adenosyl-L-homocysteine</text>
        <dbReference type="Rhea" id="RHEA:42708"/>
        <dbReference type="Rhea" id="RHEA-COMP:10188"/>
        <dbReference type="Rhea" id="RHEA-COMP:10189"/>
        <dbReference type="ChEBI" id="CHEBI:57856"/>
        <dbReference type="ChEBI" id="CHEBI:59789"/>
        <dbReference type="ChEBI" id="CHEBI:74269"/>
        <dbReference type="ChEBI" id="CHEBI:74480"/>
        <dbReference type="EC" id="2.1.1.33"/>
    </reaction>
</comment>
<comment type="catalytic activity">
    <reaction evidence="2">
        <text>a guanosine in mRNA + S-adenosyl-L-methionine = an N(7)-methylguanosine in mRNA + S-adenosyl-L-homocysteine</text>
        <dbReference type="Rhea" id="RHEA:60508"/>
        <dbReference type="Rhea" id="RHEA-COMP:15584"/>
        <dbReference type="Rhea" id="RHEA-COMP:15585"/>
        <dbReference type="ChEBI" id="CHEBI:57856"/>
        <dbReference type="ChEBI" id="CHEBI:59789"/>
        <dbReference type="ChEBI" id="CHEBI:74269"/>
        <dbReference type="ChEBI" id="CHEBI:74480"/>
    </reaction>
    <physiologicalReaction direction="left-to-right" evidence="2">
        <dbReference type="Rhea" id="RHEA:60509"/>
    </physiologicalReaction>
</comment>
<comment type="catalytic activity">
    <reaction evidence="2">
        <text>a guanosine in miRNA + S-adenosyl-L-methionine = an N(7)-methylguanosine in miRNA + S-adenosyl-L-homocysteine</text>
        <dbReference type="Rhea" id="RHEA:60512"/>
        <dbReference type="Rhea" id="RHEA-COMP:15587"/>
        <dbReference type="Rhea" id="RHEA-COMP:15588"/>
        <dbReference type="ChEBI" id="CHEBI:57856"/>
        <dbReference type="ChEBI" id="CHEBI:59789"/>
        <dbReference type="ChEBI" id="CHEBI:74269"/>
        <dbReference type="ChEBI" id="CHEBI:74480"/>
    </reaction>
    <physiologicalReaction direction="left-to-right" evidence="2">
        <dbReference type="Rhea" id="RHEA:60513"/>
    </physiologicalReaction>
</comment>
<comment type="pathway">
    <text evidence="2">tRNA modification; N(7)-methylguanine-tRNA biosynthesis.</text>
</comment>
<comment type="subunit">
    <text evidence="2">Catalytic component of the METTL1-WDR4 complex, composed of mettl1 and wdr4.</text>
</comment>
<comment type="subcellular location">
    <subcellularLocation>
        <location evidence="2">Nucleus</location>
    </subcellularLocation>
</comment>
<comment type="similarity">
    <text evidence="2">Belongs to the class I-like SAM-binding methyltransferase superfamily. TrmB family.</text>
</comment>
<evidence type="ECO:0000250" key="1">
    <source>
        <dbReference type="UniProtKB" id="Q5XJ57"/>
    </source>
</evidence>
<evidence type="ECO:0000255" key="2">
    <source>
        <dbReference type="HAMAP-Rule" id="MF_03055"/>
    </source>
</evidence>
<organism>
    <name type="scientific">Xenopus laevis</name>
    <name type="common">African clawed frog</name>
    <dbReference type="NCBI Taxonomy" id="8355"/>
    <lineage>
        <taxon>Eukaryota</taxon>
        <taxon>Metazoa</taxon>
        <taxon>Chordata</taxon>
        <taxon>Craniata</taxon>
        <taxon>Vertebrata</taxon>
        <taxon>Euteleostomi</taxon>
        <taxon>Amphibia</taxon>
        <taxon>Batrachia</taxon>
        <taxon>Anura</taxon>
        <taxon>Pipoidea</taxon>
        <taxon>Pipidae</taxon>
        <taxon>Xenopodinae</taxon>
        <taxon>Xenopus</taxon>
        <taxon>Xenopus</taxon>
    </lineage>
</organism>
<sequence length="273" mass="31843">MADTQAMASDRGVAVTLPQKRYYRQRAHSNPMADHTFQYPVKPEVMDWSEYYPEFFKPLVPDCAHDDAKDLQERKEQHQVEFADVGCGYGGLLVALSPLFPNTLMLGLEIRVKVSDYVQDRIKSLRASHLGQYQNIACIRSNAMKYLPNFFKKGQLSKMFFLFPDPHFKKTKHKWRIISPTLLAEYSYALRVGGMVYTITDVEEVHEWMVKHFTEHPLFERVEKEELVSDIIVDKLGTSTEEGKKVQRNKGQNFLAVFRRIENRTFIQRDSQQ</sequence>
<protein>
    <recommendedName>
        <fullName evidence="2">tRNA (guanine-N(7)-)-methyltransferase</fullName>
        <ecNumber evidence="2">2.1.1.33</ecNumber>
    </recommendedName>
    <alternativeName>
        <fullName evidence="2">Methyltransferase-like protein 1</fullName>
    </alternativeName>
    <alternativeName>
        <fullName evidence="2">mRNA (guanine-N(7)-)-methyltransferase</fullName>
        <ecNumber evidence="2">2.1.1.-</ecNumber>
    </alternativeName>
    <alternativeName>
        <fullName evidence="2">miRNA (guanine-N(7)-)-methyltransferase</fullName>
        <ecNumber evidence="2">2.1.1.-</ecNumber>
    </alternativeName>
    <alternativeName>
        <fullName evidence="2">tRNA (guanine(46)-N(7))-methyltransferase</fullName>
    </alternativeName>
    <alternativeName>
        <fullName evidence="2">tRNA(m7G46)-methyltransferase</fullName>
    </alternativeName>
</protein>
<name>TRMB_XENLA</name>
<gene>
    <name type="primary">mettl1</name>
</gene>
<reference key="1">
    <citation type="submission" date="2004-04" db="EMBL/GenBank/DDBJ databases">
        <authorList>
            <consortium name="NIH - Xenopus Gene Collection (XGC) project"/>
        </authorList>
    </citation>
    <scope>NUCLEOTIDE SEQUENCE [LARGE SCALE MRNA]</scope>
    <source>
        <tissue>Ovary</tissue>
    </source>
</reference>
<dbReference type="EC" id="2.1.1.33" evidence="2"/>
<dbReference type="EC" id="2.1.1.-" evidence="2"/>
<dbReference type="EMBL" id="BC068703">
    <property type="protein sequence ID" value="AAH68703.1"/>
    <property type="molecule type" value="mRNA"/>
</dbReference>
<dbReference type="RefSeq" id="NP_001084693.1">
    <property type="nucleotide sequence ID" value="NM_001091224.1"/>
</dbReference>
<dbReference type="SMR" id="Q6NU94"/>
<dbReference type="DNASU" id="414654"/>
<dbReference type="GeneID" id="414654"/>
<dbReference type="KEGG" id="xla:414654"/>
<dbReference type="AGR" id="Xenbase:XB-GENE-6252283"/>
<dbReference type="CTD" id="414654"/>
<dbReference type="Xenbase" id="XB-GENE-6252283">
    <property type="gene designation" value="mettl1.L"/>
</dbReference>
<dbReference type="OMA" id="LPNYFAK"/>
<dbReference type="OrthoDB" id="47276at2759"/>
<dbReference type="UniPathway" id="UPA00989"/>
<dbReference type="Proteomes" id="UP000186698">
    <property type="component" value="Chromosome 2L"/>
</dbReference>
<dbReference type="Bgee" id="414654">
    <property type="expression patterns" value="Expressed in blastula and 19 other cell types or tissues"/>
</dbReference>
<dbReference type="GO" id="GO:0005634">
    <property type="term" value="C:nucleus"/>
    <property type="evidence" value="ECO:0000250"/>
    <property type="project" value="UniProtKB"/>
</dbReference>
<dbReference type="GO" id="GO:0106143">
    <property type="term" value="C:tRNA (m7G46) methyltransferase complex"/>
    <property type="evidence" value="ECO:0000250"/>
    <property type="project" value="UniProtKB"/>
</dbReference>
<dbReference type="GO" id="GO:0043527">
    <property type="term" value="C:tRNA methyltransferase complex"/>
    <property type="evidence" value="ECO:0000318"/>
    <property type="project" value="GO_Central"/>
</dbReference>
<dbReference type="GO" id="GO:0160090">
    <property type="term" value="F:internal mRNA (guanine-N7-)-methyltransferase activity"/>
    <property type="evidence" value="ECO:0007669"/>
    <property type="project" value="RHEA"/>
</dbReference>
<dbReference type="GO" id="GO:0008176">
    <property type="term" value="F:tRNA (guanine(46)-N7)-methyltransferase activity"/>
    <property type="evidence" value="ECO:0000250"/>
    <property type="project" value="UniProtKB"/>
</dbReference>
<dbReference type="GO" id="GO:0000049">
    <property type="term" value="F:tRNA binding"/>
    <property type="evidence" value="ECO:0007669"/>
    <property type="project" value="UniProtKB-UniRule"/>
</dbReference>
<dbReference type="GO" id="GO:0036265">
    <property type="term" value="P:RNA (guanine-N7)-methylation"/>
    <property type="evidence" value="ECO:0000318"/>
    <property type="project" value="GO_Central"/>
</dbReference>
<dbReference type="GO" id="GO:0106004">
    <property type="term" value="P:tRNA (guanine-N7)-methylation"/>
    <property type="evidence" value="ECO:0000250"/>
    <property type="project" value="UniProtKB"/>
</dbReference>
<dbReference type="GO" id="GO:0030488">
    <property type="term" value="P:tRNA methylation"/>
    <property type="evidence" value="ECO:0000318"/>
    <property type="project" value="GO_Central"/>
</dbReference>
<dbReference type="GO" id="GO:0006400">
    <property type="term" value="P:tRNA modification"/>
    <property type="evidence" value="ECO:0000250"/>
    <property type="project" value="UniProtKB"/>
</dbReference>
<dbReference type="FunFam" id="3.40.50.150:FF:000060">
    <property type="entry name" value="tRNA (guanine-N(7)-)-methyltransferase"/>
    <property type="match status" value="1"/>
</dbReference>
<dbReference type="Gene3D" id="3.40.50.150">
    <property type="entry name" value="Vaccinia Virus protein VP39"/>
    <property type="match status" value="1"/>
</dbReference>
<dbReference type="HAMAP" id="MF_03055">
    <property type="entry name" value="tRNA_methyltr_TrmB_euk"/>
    <property type="match status" value="1"/>
</dbReference>
<dbReference type="InterPro" id="IPR029063">
    <property type="entry name" value="SAM-dependent_MTases_sf"/>
</dbReference>
<dbReference type="InterPro" id="IPR025763">
    <property type="entry name" value="Trm8_euk"/>
</dbReference>
<dbReference type="InterPro" id="IPR003358">
    <property type="entry name" value="tRNA_(Gua-N-7)_MeTrfase_Trmb"/>
</dbReference>
<dbReference type="NCBIfam" id="TIGR00091">
    <property type="entry name" value="tRNA (guanosine(46)-N7)-methyltransferase TrmB"/>
    <property type="match status" value="1"/>
</dbReference>
<dbReference type="PANTHER" id="PTHR23417">
    <property type="entry name" value="3-DEOXY-D-MANNO-OCTULOSONIC-ACID TRANSFERASE/TRNA GUANINE-N 7 - -METHYLTRANSFERASE"/>
    <property type="match status" value="1"/>
</dbReference>
<dbReference type="PANTHER" id="PTHR23417:SF25">
    <property type="entry name" value="TRNA (GUANINE-N(7)-)-METHYLTRANSFERASE A"/>
    <property type="match status" value="1"/>
</dbReference>
<dbReference type="Pfam" id="PF02390">
    <property type="entry name" value="Methyltransf_4"/>
    <property type="match status" value="1"/>
</dbReference>
<dbReference type="SUPFAM" id="SSF53335">
    <property type="entry name" value="S-adenosyl-L-methionine-dependent methyltransferases"/>
    <property type="match status" value="1"/>
</dbReference>
<dbReference type="PROSITE" id="PS51625">
    <property type="entry name" value="SAM_MT_TRMB"/>
    <property type="match status" value="1"/>
</dbReference>
<proteinExistence type="evidence at transcript level"/>